<gene>
    <name type="primary">yajD</name>
    <name type="ordered locus">STM0411</name>
</gene>
<accession>P0A1S8</accession>
<accession>P40777</accession>
<comment type="similarity">
    <text evidence="1">Belongs to the HNH nuclease family.</text>
</comment>
<reference key="1">
    <citation type="journal article" date="1997" name="Microbiology">
        <title>The nucleoside-specific Tsx channel from the outer membrane of Salmonella typhimurium, Klebsiella pneumoniae and Enterobacter aerogenes: functional characterization and DNA sequence analysis of the tsx genes.</title>
        <authorList>
            <person name="Nieweg A."/>
            <person name="Bremer E."/>
        </authorList>
    </citation>
    <scope>NUCLEOTIDE SEQUENCE [GENOMIC DNA]</scope>
    <source>
        <strain>LT2</strain>
    </source>
</reference>
<reference key="2">
    <citation type="journal article" date="2001" name="Nature">
        <title>Complete genome sequence of Salmonella enterica serovar Typhimurium LT2.</title>
        <authorList>
            <person name="McClelland M."/>
            <person name="Sanderson K.E."/>
            <person name="Spieth J."/>
            <person name="Clifton S.W."/>
            <person name="Latreille P."/>
            <person name="Courtney L."/>
            <person name="Porwollik S."/>
            <person name="Ali J."/>
            <person name="Dante M."/>
            <person name="Du F."/>
            <person name="Hou S."/>
            <person name="Layman D."/>
            <person name="Leonard S."/>
            <person name="Nguyen C."/>
            <person name="Scott K."/>
            <person name="Holmes A."/>
            <person name="Grewal N."/>
            <person name="Mulvaney E."/>
            <person name="Ryan E."/>
            <person name="Sun H."/>
            <person name="Florea L."/>
            <person name="Miller W."/>
            <person name="Stoneking T."/>
            <person name="Nhan M."/>
            <person name="Waterston R."/>
            <person name="Wilson R.K."/>
        </authorList>
    </citation>
    <scope>NUCLEOTIDE SEQUENCE [LARGE SCALE GENOMIC DNA]</scope>
    <source>
        <strain>LT2 / SGSC1412 / ATCC 700720</strain>
    </source>
</reference>
<sequence length="115" mass="13307">MAIIPKNYARLESGYREKALKLFPWVCGRCSREFVYSNLRELTVHHIDHDHTNNPEDGSNWELLCLYCHDHEHSKYTEADQYGSTVIAGEDAQKDVGEATYNPFADLKAMMNKKK</sequence>
<organism>
    <name type="scientific">Salmonella typhimurium (strain LT2 / SGSC1412 / ATCC 700720)</name>
    <dbReference type="NCBI Taxonomy" id="99287"/>
    <lineage>
        <taxon>Bacteria</taxon>
        <taxon>Pseudomonadati</taxon>
        <taxon>Pseudomonadota</taxon>
        <taxon>Gammaproteobacteria</taxon>
        <taxon>Enterobacterales</taxon>
        <taxon>Enterobacteriaceae</taxon>
        <taxon>Salmonella</taxon>
    </lineage>
</organism>
<name>YAJD_SALTY</name>
<keyword id="KW-0378">Hydrolase</keyword>
<keyword id="KW-0540">Nuclease</keyword>
<keyword id="KW-1185">Reference proteome</keyword>
<protein>
    <recommendedName>
        <fullName>Putative HNH nuclease YajD</fullName>
        <ecNumber>3.1.-.-</ecNumber>
    </recommendedName>
</protein>
<proteinExistence type="inferred from homology"/>
<evidence type="ECO:0000305" key="1"/>
<feature type="chain" id="PRO_0000168611" description="Putative HNH nuclease YajD">
    <location>
        <begin position="1"/>
        <end position="115"/>
    </location>
</feature>
<feature type="domain" description="HNH">
    <location>
        <begin position="27"/>
        <end position="75"/>
    </location>
</feature>
<feature type="sequence conflict" description="In Ref. 1; CAA81400." evidence="1" ref="1">
    <original>AMMNKKK</original>
    <variation>R</variation>
    <location>
        <begin position="109"/>
        <end position="115"/>
    </location>
</feature>
<dbReference type="EC" id="3.1.-.-"/>
<dbReference type="EMBL" id="Z26657">
    <property type="protein sequence ID" value="CAA81400.1"/>
    <property type="molecule type" value="Genomic_DNA"/>
</dbReference>
<dbReference type="EMBL" id="AE006468">
    <property type="protein sequence ID" value="AAL19365.1"/>
    <property type="molecule type" value="Genomic_DNA"/>
</dbReference>
<dbReference type="PIR" id="S49161">
    <property type="entry name" value="S49161"/>
</dbReference>
<dbReference type="RefSeq" id="NP_459406.1">
    <property type="nucleotide sequence ID" value="NC_003197.2"/>
</dbReference>
<dbReference type="RefSeq" id="WP_000974818.1">
    <property type="nucleotide sequence ID" value="NC_003197.2"/>
</dbReference>
<dbReference type="STRING" id="99287.STM0411"/>
<dbReference type="PaxDb" id="99287-STM0411"/>
<dbReference type="GeneID" id="1251930"/>
<dbReference type="KEGG" id="stm:STM0411"/>
<dbReference type="PATRIC" id="fig|99287.12.peg.438"/>
<dbReference type="HOGENOM" id="CLU_136125_1_0_6"/>
<dbReference type="OMA" id="CHDNEHA"/>
<dbReference type="PhylomeDB" id="P0A1S8"/>
<dbReference type="BioCyc" id="SENT99287:STM0411-MONOMER"/>
<dbReference type="Proteomes" id="UP000001014">
    <property type="component" value="Chromosome"/>
</dbReference>
<dbReference type="GO" id="GO:0005829">
    <property type="term" value="C:cytosol"/>
    <property type="evidence" value="ECO:0000318"/>
    <property type="project" value="GO_Central"/>
</dbReference>
<dbReference type="GO" id="GO:0004519">
    <property type="term" value="F:endonuclease activity"/>
    <property type="evidence" value="ECO:0007669"/>
    <property type="project" value="InterPro"/>
</dbReference>
<dbReference type="GO" id="GO:0003676">
    <property type="term" value="F:nucleic acid binding"/>
    <property type="evidence" value="ECO:0007669"/>
    <property type="project" value="InterPro"/>
</dbReference>
<dbReference type="GO" id="GO:0008270">
    <property type="term" value="F:zinc ion binding"/>
    <property type="evidence" value="ECO:0007669"/>
    <property type="project" value="InterPro"/>
</dbReference>
<dbReference type="CDD" id="cd00085">
    <property type="entry name" value="HNHc"/>
    <property type="match status" value="1"/>
</dbReference>
<dbReference type="Gene3D" id="1.10.30.50">
    <property type="match status" value="1"/>
</dbReference>
<dbReference type="InterPro" id="IPR002711">
    <property type="entry name" value="HNH"/>
</dbReference>
<dbReference type="InterPro" id="IPR003615">
    <property type="entry name" value="HNH_nuc"/>
</dbReference>
<dbReference type="NCBIfam" id="NF008448">
    <property type="entry name" value="PRK11295.1"/>
    <property type="match status" value="1"/>
</dbReference>
<dbReference type="PANTHER" id="PTHR41286">
    <property type="entry name" value="HNH NUCLEASE YAJD-RELATED"/>
    <property type="match status" value="1"/>
</dbReference>
<dbReference type="PANTHER" id="PTHR41286:SF1">
    <property type="entry name" value="HNH NUCLEASE YAJD-RELATED"/>
    <property type="match status" value="1"/>
</dbReference>
<dbReference type="Pfam" id="PF01844">
    <property type="entry name" value="HNH"/>
    <property type="match status" value="1"/>
</dbReference>
<dbReference type="SMART" id="SM00507">
    <property type="entry name" value="HNHc"/>
    <property type="match status" value="1"/>
</dbReference>